<reference key="1">
    <citation type="journal article" date="2002" name="Science">
        <title>50 million years of genomic stasis in endosymbiotic bacteria.</title>
        <authorList>
            <person name="Tamas I."/>
            <person name="Klasson L."/>
            <person name="Canbaeck B."/>
            <person name="Naeslund A.K."/>
            <person name="Eriksson A.-S."/>
            <person name="Wernegreen J.J."/>
            <person name="Sandstroem J.P."/>
            <person name="Moran N.A."/>
            <person name="Andersson S.G.E."/>
        </authorList>
    </citation>
    <scope>NUCLEOTIDE SEQUENCE [LARGE SCALE GENOMIC DNA]</scope>
    <source>
        <strain>Sg</strain>
    </source>
</reference>
<name>HFLK_BUCAP</name>
<evidence type="ECO:0000250" key="1"/>
<evidence type="ECO:0000255" key="2"/>
<evidence type="ECO:0000256" key="3">
    <source>
        <dbReference type="SAM" id="MobiDB-lite"/>
    </source>
</evidence>
<evidence type="ECO:0000305" key="4"/>
<organism>
    <name type="scientific">Buchnera aphidicola subsp. Schizaphis graminum (strain Sg)</name>
    <dbReference type="NCBI Taxonomy" id="198804"/>
    <lineage>
        <taxon>Bacteria</taxon>
        <taxon>Pseudomonadati</taxon>
        <taxon>Pseudomonadota</taxon>
        <taxon>Gammaproteobacteria</taxon>
        <taxon>Enterobacterales</taxon>
        <taxon>Erwiniaceae</taxon>
        <taxon>Buchnera</taxon>
    </lineage>
</organism>
<feature type="chain" id="PRO_0000094083" description="Protein HflK">
    <location>
        <begin position="1"/>
        <end position="411"/>
    </location>
</feature>
<feature type="transmembrane region" description="Helical" evidence="2">
    <location>
        <begin position="71"/>
        <end position="91"/>
    </location>
</feature>
<feature type="region of interest" description="Disordered" evidence="3">
    <location>
        <begin position="1"/>
        <end position="34"/>
    </location>
</feature>
<feature type="compositionally biased region" description="Polar residues" evidence="3">
    <location>
        <begin position="1"/>
        <end position="10"/>
    </location>
</feature>
<feature type="compositionally biased region" description="Basic and acidic residues" evidence="3">
    <location>
        <begin position="15"/>
        <end position="34"/>
    </location>
</feature>
<sequence>MAWNKFNNSEPELDPWGKKNSQEKNGSKNKDDRKNHEKIITLDFKKFLYNINNIFNKTNNSQNLSKNKINPFLIIAFVSFFVWCFSGFYTIKEAERGVVTTFGKFSHLVAPGLNWRPVFINEVKAVNVETVRELATSGVMLTSDENVVRVEMNVQYKITDPADYLFSVAYPDDSLRQATDSALRGVIGHSNMDRVLTEGRTLIRSDTQKEIEETIKPYKLGITILDVNFQTARPPEEVKEAFDDAIAARENREQYIREAEAYSNEVQPKAHGKAQRILEEAKAYSSRRILEAQGEVVRFLKILPEYRKNKEMTLKRLYIESMEKLLSKTKKIFIDKKNHSKLFLSLNNFFHQDKFNKQDLFNNPINLSKNHSCSFQKNKEINDVSSLPPSDFFKKRRIESIRTNIKNIERE</sequence>
<gene>
    <name type="primary">hflK</name>
    <name type="ordered locus">BUsg_548</name>
</gene>
<keyword id="KW-0472">Membrane</keyword>
<keyword id="KW-0812">Transmembrane</keyword>
<keyword id="KW-1133">Transmembrane helix</keyword>
<accession>Q8K914</accession>
<comment type="function">
    <text evidence="1">HflC and HflK could encode or regulate a protease.</text>
</comment>
<comment type="subunit">
    <text evidence="1">HflC and HflK may interact to form a multimeric complex.</text>
</comment>
<comment type="subcellular location">
    <subcellularLocation>
        <location evidence="4">Membrane</location>
        <topology evidence="4">Single-pass membrane protein</topology>
    </subcellularLocation>
</comment>
<comment type="similarity">
    <text evidence="4">Belongs to the band 7/mec-2 family. HflK subfamily.</text>
</comment>
<protein>
    <recommendedName>
        <fullName>Protein HflK</fullName>
    </recommendedName>
</protein>
<proteinExistence type="inferred from homology"/>
<dbReference type="EMBL" id="AE013218">
    <property type="protein sequence ID" value="AAM68087.1"/>
    <property type="molecule type" value="Genomic_DNA"/>
</dbReference>
<dbReference type="RefSeq" id="WP_011054053.1">
    <property type="nucleotide sequence ID" value="NC_004061.1"/>
</dbReference>
<dbReference type="SMR" id="Q8K914"/>
<dbReference type="STRING" id="198804.BUsg_548"/>
<dbReference type="GeneID" id="93004025"/>
<dbReference type="KEGG" id="bas:BUsg_548"/>
<dbReference type="eggNOG" id="COG0330">
    <property type="taxonomic scope" value="Bacteria"/>
</dbReference>
<dbReference type="HOGENOM" id="CLU_039173_1_1_6"/>
<dbReference type="Proteomes" id="UP000000416">
    <property type="component" value="Chromosome"/>
</dbReference>
<dbReference type="GO" id="GO:0016020">
    <property type="term" value="C:membrane"/>
    <property type="evidence" value="ECO:0007669"/>
    <property type="project" value="UniProtKB-SubCell"/>
</dbReference>
<dbReference type="CDD" id="cd03404">
    <property type="entry name" value="SPFH_HflK"/>
    <property type="match status" value="1"/>
</dbReference>
<dbReference type="FunFam" id="3.30.479.30:FF:000007">
    <property type="entry name" value="Protein HflK"/>
    <property type="match status" value="1"/>
</dbReference>
<dbReference type="Gene3D" id="3.30.479.30">
    <property type="entry name" value="Band 7 domain"/>
    <property type="match status" value="1"/>
</dbReference>
<dbReference type="InterPro" id="IPR050710">
    <property type="entry name" value="Band7/mec-2_domain"/>
</dbReference>
<dbReference type="InterPro" id="IPR001107">
    <property type="entry name" value="Band_7"/>
</dbReference>
<dbReference type="InterPro" id="IPR036013">
    <property type="entry name" value="Band_7/SPFH_dom_sf"/>
</dbReference>
<dbReference type="InterPro" id="IPR010201">
    <property type="entry name" value="HflK"/>
</dbReference>
<dbReference type="InterPro" id="IPR001972">
    <property type="entry name" value="Stomatin_HflK_fam"/>
</dbReference>
<dbReference type="NCBIfam" id="TIGR01933">
    <property type="entry name" value="hflK"/>
    <property type="match status" value="1"/>
</dbReference>
<dbReference type="PANTHER" id="PTHR43327:SF2">
    <property type="entry name" value="MODULATOR OF FTSH PROTEASE HFLK"/>
    <property type="match status" value="1"/>
</dbReference>
<dbReference type="PANTHER" id="PTHR43327">
    <property type="entry name" value="STOMATIN-LIKE PROTEIN 2, MITOCHONDRIAL"/>
    <property type="match status" value="1"/>
</dbReference>
<dbReference type="Pfam" id="PF01145">
    <property type="entry name" value="Band_7"/>
    <property type="match status" value="1"/>
</dbReference>
<dbReference type="PRINTS" id="PR00721">
    <property type="entry name" value="STOMATIN"/>
</dbReference>
<dbReference type="SMART" id="SM00244">
    <property type="entry name" value="PHB"/>
    <property type="match status" value="1"/>
</dbReference>
<dbReference type="SUPFAM" id="SSF117892">
    <property type="entry name" value="Band 7/SPFH domain"/>
    <property type="match status" value="1"/>
</dbReference>